<sequence>MNLVMALLTNTALASLLVLIAFWLPQLNSYAEKTSPYECGFDPMGSARLPFSMKFFLVAITFLLFDLEVALLLPLPWATQTTNLKTMLIMALTLISLLAISLAYEWTQKGLEWTE</sequence>
<geneLocation type="mitochondrion"/>
<proteinExistence type="inferred from homology"/>
<comment type="function">
    <text evidence="1">Core subunit of the mitochondrial membrane respiratory chain NADH dehydrogenase (Complex I) which catalyzes electron transfer from NADH through the respiratory chain, using ubiquinone as an electron acceptor. Essential for the catalytic activity of complex I.</text>
</comment>
<comment type="catalytic activity">
    <reaction evidence="1">
        <text>a ubiquinone + NADH + 5 H(+)(in) = a ubiquinol + NAD(+) + 4 H(+)(out)</text>
        <dbReference type="Rhea" id="RHEA:29091"/>
        <dbReference type="Rhea" id="RHEA-COMP:9565"/>
        <dbReference type="Rhea" id="RHEA-COMP:9566"/>
        <dbReference type="ChEBI" id="CHEBI:15378"/>
        <dbReference type="ChEBI" id="CHEBI:16389"/>
        <dbReference type="ChEBI" id="CHEBI:17976"/>
        <dbReference type="ChEBI" id="CHEBI:57540"/>
        <dbReference type="ChEBI" id="CHEBI:57945"/>
        <dbReference type="EC" id="7.1.1.2"/>
    </reaction>
</comment>
<comment type="subunit">
    <text evidence="1">Core subunit of respiratory chain NADH dehydrogenase (Complex I) which is composed of 45 different subunits (By similarity). Interacts with TMEM186 (By similarity). Interacts with TMEM242 (By similarity).</text>
</comment>
<comment type="subcellular location">
    <subcellularLocation>
        <location evidence="2">Mitochondrion inner membrane</location>
        <topology evidence="3">Multi-pass membrane protein</topology>
    </subcellularLocation>
</comment>
<comment type="similarity">
    <text evidence="4">Belongs to the complex I subunit 3 family.</text>
</comment>
<reference key="1">
    <citation type="journal article" date="1998" name="Proc. R. Soc. B">
        <title>Analyses of mitochondrial genomes strongly support a hippopotamus-whale clade.</title>
        <authorList>
            <person name="Ursing B.M."/>
            <person name="Arnason U."/>
        </authorList>
    </citation>
    <scope>NUCLEOTIDE SEQUENCE [GENOMIC DNA]</scope>
</reference>
<protein>
    <recommendedName>
        <fullName evidence="1">NADH-ubiquinone oxidoreductase chain 3</fullName>
        <ecNumber evidence="1">7.1.1.2</ecNumber>
    </recommendedName>
    <alternativeName>
        <fullName>NADH dehydrogenase subunit 3</fullName>
    </alternativeName>
</protein>
<gene>
    <name evidence="1" type="primary">MT-ND3</name>
    <name type="synonym">MTND3</name>
    <name type="synonym">NADH3</name>
    <name type="synonym">ND3</name>
</gene>
<feature type="chain" id="PRO_0000117750" description="NADH-ubiquinone oxidoreductase chain 3">
    <location>
        <begin position="1"/>
        <end position="115"/>
    </location>
</feature>
<feature type="transmembrane region" description="Helical" evidence="3">
    <location>
        <begin position="3"/>
        <end position="23"/>
    </location>
</feature>
<feature type="transmembrane region" description="Helical" evidence="3">
    <location>
        <begin position="55"/>
        <end position="75"/>
    </location>
</feature>
<feature type="transmembrane region" description="Helical" evidence="3">
    <location>
        <begin position="86"/>
        <end position="106"/>
    </location>
</feature>
<evidence type="ECO:0000250" key="1">
    <source>
        <dbReference type="UniProtKB" id="P03897"/>
    </source>
</evidence>
<evidence type="ECO:0000250" key="2">
    <source>
        <dbReference type="UniProtKB" id="P03898"/>
    </source>
</evidence>
<evidence type="ECO:0000255" key="3"/>
<evidence type="ECO:0000305" key="4"/>
<organism>
    <name type="scientific">Hippopotamus amphibius</name>
    <name type="common">Hippopotamus</name>
    <dbReference type="NCBI Taxonomy" id="9833"/>
    <lineage>
        <taxon>Eukaryota</taxon>
        <taxon>Metazoa</taxon>
        <taxon>Chordata</taxon>
        <taxon>Craniata</taxon>
        <taxon>Vertebrata</taxon>
        <taxon>Euteleostomi</taxon>
        <taxon>Mammalia</taxon>
        <taxon>Eutheria</taxon>
        <taxon>Laurasiatheria</taxon>
        <taxon>Artiodactyla</taxon>
        <taxon>Whippomorpha</taxon>
        <taxon>Ancodonta</taxon>
        <taxon>Hippopotamidae</taxon>
        <taxon>Hippopotamus</taxon>
    </lineage>
</organism>
<dbReference type="EC" id="7.1.1.2" evidence="1"/>
<dbReference type="EMBL" id="AJ010957">
    <property type="protein sequence ID" value="CAA09435.1"/>
    <property type="molecule type" value="Genomic_DNA"/>
</dbReference>
<dbReference type="RefSeq" id="NP_008797.1">
    <property type="nucleotide sequence ID" value="NC_000889.1"/>
</dbReference>
<dbReference type="SMR" id="Q9ZZY4"/>
<dbReference type="GeneID" id="808676"/>
<dbReference type="CTD" id="4537"/>
<dbReference type="GO" id="GO:0005743">
    <property type="term" value="C:mitochondrial inner membrane"/>
    <property type="evidence" value="ECO:0000250"/>
    <property type="project" value="UniProtKB"/>
</dbReference>
<dbReference type="GO" id="GO:0030964">
    <property type="term" value="C:NADH dehydrogenase complex"/>
    <property type="evidence" value="ECO:0007669"/>
    <property type="project" value="TreeGrafter"/>
</dbReference>
<dbReference type="GO" id="GO:0008137">
    <property type="term" value="F:NADH dehydrogenase (ubiquinone) activity"/>
    <property type="evidence" value="ECO:0000250"/>
    <property type="project" value="UniProtKB"/>
</dbReference>
<dbReference type="GO" id="GO:0006120">
    <property type="term" value="P:mitochondrial electron transport, NADH to ubiquinone"/>
    <property type="evidence" value="ECO:0000250"/>
    <property type="project" value="UniProtKB"/>
</dbReference>
<dbReference type="FunFam" id="1.20.58.1610:FF:000004">
    <property type="entry name" value="NADH-quinone oxidoreductase subunit A"/>
    <property type="match status" value="1"/>
</dbReference>
<dbReference type="Gene3D" id="1.20.58.1610">
    <property type="entry name" value="NADH:ubiquinone/plastoquinone oxidoreductase, chain 3"/>
    <property type="match status" value="1"/>
</dbReference>
<dbReference type="InterPro" id="IPR000440">
    <property type="entry name" value="NADH_UbQ/plastoQ_OxRdtase_su3"/>
</dbReference>
<dbReference type="InterPro" id="IPR038430">
    <property type="entry name" value="NDAH_ubi_oxred_su3_sf"/>
</dbReference>
<dbReference type="PANTHER" id="PTHR11058">
    <property type="entry name" value="NADH-UBIQUINONE OXIDOREDUCTASE CHAIN 3"/>
    <property type="match status" value="1"/>
</dbReference>
<dbReference type="PANTHER" id="PTHR11058:SF9">
    <property type="entry name" value="NADH-UBIQUINONE OXIDOREDUCTASE CHAIN 3"/>
    <property type="match status" value="1"/>
</dbReference>
<dbReference type="Pfam" id="PF00507">
    <property type="entry name" value="Oxidored_q4"/>
    <property type="match status" value="1"/>
</dbReference>
<keyword id="KW-0249">Electron transport</keyword>
<keyword id="KW-0472">Membrane</keyword>
<keyword id="KW-0496">Mitochondrion</keyword>
<keyword id="KW-0999">Mitochondrion inner membrane</keyword>
<keyword id="KW-0520">NAD</keyword>
<keyword id="KW-0679">Respiratory chain</keyword>
<keyword id="KW-1278">Translocase</keyword>
<keyword id="KW-0812">Transmembrane</keyword>
<keyword id="KW-1133">Transmembrane helix</keyword>
<keyword id="KW-0813">Transport</keyword>
<keyword id="KW-0830">Ubiquinone</keyword>
<accession>Q9ZZY4</accession>
<name>NU3M_HIPAM</name>